<protein>
    <recommendedName>
        <fullName>Flagellin</fullName>
    </recommendedName>
    <alternativeName>
        <fullName>Phase 1-I flagellin</fullName>
    </alternativeName>
</protein>
<accession>P06179</accession>
<accession>P97160</accession>
<accession>Q02871</accession>
<accession>Q56088</accession>
<comment type="function">
    <text>Flagellin is the subunit protein which polymerizes to form the filaments of bacterial flagella.</text>
</comment>
<comment type="interaction">
    <interactant intactId="EBI-2011501">
        <id>P06179</id>
    </interactant>
    <interactant intactId="EBI-2011519">
        <id>P26609</id>
        <label>fliS</label>
    </interactant>
    <organismsDiffer>false</organismsDiffer>
    <experiments>6</experiments>
</comment>
<comment type="interaction">
    <interactant intactId="EBI-2011501">
        <id>P06179</id>
    </interactant>
    <interactant intactId="EBI-15610664">
        <id>P0A1N2</id>
        <label>fliT</label>
    </interactant>
    <organismsDiffer>false</organismsDiffer>
    <experiments>2</experiments>
</comment>
<comment type="interaction">
    <interactant intactId="EBI-2011501">
        <id>P06179</id>
    </interactant>
    <interactant intactId="EBI-15944130">
        <id>Q9R016</id>
        <label>Naip5</label>
    </interactant>
    <organismsDiffer>true</organismsDiffer>
    <experiments>9</experiments>
</comment>
<comment type="subcellular location">
    <subcellularLocation>
        <location>Secreted</location>
    </subcellularLocation>
    <subcellularLocation>
        <location>Bacterial flagellum</location>
    </subcellularLocation>
</comment>
<comment type="induction">
    <text evidence="2">Inhibited in nutrient-poor medium (at protein level).</text>
</comment>
<comment type="miscellaneous">
    <text>Individual Salmonella serotypes usually alternate between the production of 2 antigenic forms of flagella, termed phase 1 and phase 2, each specified by separate structural genes, fliC and fljB.</text>
</comment>
<comment type="similarity">
    <text evidence="3">Belongs to the bacterial flagellin family.</text>
</comment>
<name>FLIC_SALTY</name>
<keyword id="KW-0002">3D-structure</keyword>
<keyword id="KW-0975">Bacterial flagellum</keyword>
<keyword id="KW-1185">Reference proteome</keyword>
<keyword id="KW-0964">Secreted</keyword>
<reference key="1">
    <citation type="journal article" date="1985" name="J. Biol. Chem.">
        <title>The covalent structure of the phase-1 flagellar filament protein of Salmonella typhimurium and its comparison with other flagellins.</title>
        <authorList>
            <person name="Joys T.M."/>
        </authorList>
    </citation>
    <scope>NUCLEOTIDE SEQUENCE [GENOMIC DNA]</scope>
</reference>
<reference key="2">
    <citation type="journal article" date="1991" name="J. Mol. Biol.">
        <title>Amino acids responsible for flagellar shape are distributed in terminal regions of flagellin.</title>
        <authorList>
            <person name="Kanto S."/>
            <person name="Okino H."/>
            <person name="Aizawa S."/>
            <person name="Yamaguchi S."/>
        </authorList>
    </citation>
    <scope>NUCLEOTIDE SEQUENCE [GENOMIC DNA]</scope>
</reference>
<reference key="3">
    <citation type="journal article" date="1993" name="J. Bacteriol.">
        <title>Conversion of the Salmonella phase 1 flagellin gene fliC to the phase 2 gene fljB on the Escherichia coli K-12 chromosome.</title>
        <authorList>
            <person name="Okazaki N."/>
            <person name="Matsuo S."/>
            <person name="Saito K."/>
            <person name="Tominaga A."/>
            <person name="Enomoto M."/>
        </authorList>
    </citation>
    <scope>NUCLEOTIDE SEQUENCE [GENOMIC DNA]</scope>
</reference>
<reference key="4">
    <citation type="journal article" date="2001" name="Nature">
        <title>Complete genome sequence of Salmonella enterica serovar Typhimurium LT2.</title>
        <authorList>
            <person name="McClelland M."/>
            <person name="Sanderson K.E."/>
            <person name="Spieth J."/>
            <person name="Clifton S.W."/>
            <person name="Latreille P."/>
            <person name="Courtney L."/>
            <person name="Porwollik S."/>
            <person name="Ali J."/>
            <person name="Dante M."/>
            <person name="Du F."/>
            <person name="Hou S."/>
            <person name="Layman D."/>
            <person name="Leonard S."/>
            <person name="Nguyen C."/>
            <person name="Scott K."/>
            <person name="Holmes A."/>
            <person name="Grewal N."/>
            <person name="Mulvaney E."/>
            <person name="Ryan E."/>
            <person name="Sun H."/>
            <person name="Florea L."/>
            <person name="Miller W."/>
            <person name="Stoneking T."/>
            <person name="Nhan M."/>
            <person name="Waterston R."/>
            <person name="Wilson R.K."/>
        </authorList>
    </citation>
    <scope>NUCLEOTIDE SEQUENCE [LARGE SCALE GENOMIC DNA]</scope>
    <source>
        <strain>LT2 / SGSC1412 / ATCC 700720</strain>
    </source>
</reference>
<reference key="5">
    <citation type="journal article" date="1990" name="J. Mol. Biol.">
        <title>Flagellar hook and hook-associated proteins of Salmonella typhimurium and their relationship to other axial components of the flagellum.</title>
        <authorList>
            <person name="Homma M."/>
            <person name="Derosier D.J."/>
            <person name="Macnab R.M."/>
        </authorList>
    </citation>
    <scope>NUCLEOTIDE SEQUENCE [GENOMIC DNA] OF 1-21</scope>
</reference>
<reference key="6">
    <citation type="journal article" date="1980" name="Proc. Natl. Acad. Sci. U.S.A.">
        <title>Analysis of the nucleotide sequence of an invertible controlling element.</title>
        <authorList>
            <person name="Zieg J."/>
            <person name="Simon M."/>
        </authorList>
    </citation>
    <scope>NUCLEOTIDE SEQUENCE [GENOMIC DNA] OF 1-20</scope>
</reference>
<reference key="7">
    <citation type="journal article" date="1990" name="J. Bacteriol.">
        <title>Sequence invariance of the antigen-coding central region of the phase 1 flagellar filament gene (fliC) among strains of Salmonella typhimurium.</title>
        <authorList>
            <person name="Smith N.H."/>
            <person name="Selander R.K."/>
        </authorList>
    </citation>
    <scope>NUCLEOTIDE SEQUENCE [GENOMIC DNA] OF 145-428</scope>
</reference>
<reference key="8">
    <citation type="journal article" date="1991" name="J. Mol. Biol.">
        <title>Point mutations that lock Salmonella typhimurium flagellar filaments in the straight right-handed and left-handed forms and their relation to filament superhelicity.</title>
        <authorList>
            <person name="Hyman H.C."/>
            <person name="Trachtenberg S."/>
        </authorList>
    </citation>
    <scope>NUCLEOTIDE SEQUENCE [GENOMIC DNA] OF 411-495</scope>
</reference>
<reference key="9">
    <citation type="journal article" date="1997" name="Microbiology">
        <title>The flagellin N-methylase gene fliB and an adjacent serovar-specific IS200 element in Salmonella typhimurium.</title>
        <authorList>
            <person name="Burnens A.P."/>
            <person name="Stanley J."/>
            <person name="Sack R."/>
            <person name="Hunziker P."/>
            <person name="Brodard I."/>
            <person name="Nicolet J."/>
        </authorList>
    </citation>
    <scope>NUCLEOTIDE SEQUENCE [GENOMIC DNA] OF 476-495</scope>
    <source>
        <strain>LT2 / ATCC 23564</strain>
    </source>
</reference>
<reference key="10">
    <citation type="journal article" date="2011" name="J. Bacteriol.">
        <title>EAL domain protein YdiV acts as an anti-FlhD4C2 factor responsible for nutritional control of the flagellar regulon in Salmonella enterica Serovar Typhimurium.</title>
        <authorList>
            <person name="Wada T."/>
            <person name="Morizane T."/>
            <person name="Abo T."/>
            <person name="Tominaga A."/>
            <person name="Inoue-Tanaka K."/>
            <person name="Kutsukake K."/>
        </authorList>
    </citation>
    <scope>INDUCTION</scope>
    <source>
        <strain>LT2 / SGSC1412 / ATCC 700720</strain>
    </source>
</reference>
<dbReference type="EMBL" id="M11332">
    <property type="protein sequence ID" value="AAA27072.1"/>
    <property type="molecule type" value="Genomic_DNA"/>
</dbReference>
<dbReference type="EMBL" id="D13689">
    <property type="protein sequence ID" value="BAA02846.1"/>
    <property type="molecule type" value="Genomic_DNA"/>
</dbReference>
<dbReference type="EMBL" id="AE006468">
    <property type="protein sequence ID" value="AAL20871.1"/>
    <property type="molecule type" value="Genomic_DNA"/>
</dbReference>
<dbReference type="EMBL" id="X51740">
    <property type="protein sequence ID" value="CAA36029.1"/>
    <property type="molecule type" value="Genomic_DNA"/>
</dbReference>
<dbReference type="EMBL" id="J01801">
    <property type="protein sequence ID" value="AAA27074.1"/>
    <property type="molecule type" value="Genomic_DNA"/>
</dbReference>
<dbReference type="EMBL" id="M33808">
    <property type="protein sequence ID" value="AAA27080.1"/>
    <property type="molecule type" value="Genomic_DNA"/>
</dbReference>
<dbReference type="EMBL" id="Z54217">
    <property type="protein sequence ID" value="CAA90950.1"/>
    <property type="molecule type" value="Genomic_DNA"/>
</dbReference>
<dbReference type="PIR" id="A24262">
    <property type="entry name" value="A24262"/>
</dbReference>
<dbReference type="PIR" id="S16121">
    <property type="entry name" value="S16121"/>
</dbReference>
<dbReference type="RefSeq" id="NP_460912.1">
    <property type="nucleotide sequence ID" value="NC_003197.2"/>
</dbReference>
<dbReference type="RefSeq" id="WP_000079805.1">
    <property type="nucleotide sequence ID" value="NC_003197.2"/>
</dbReference>
<dbReference type="PDB" id="1IO1">
    <property type="method" value="X-ray"/>
    <property type="resolution" value="2.00 A"/>
    <property type="chains" value="A=54-451"/>
</dbReference>
<dbReference type="PDB" id="1UCU">
    <property type="method" value="EM"/>
    <property type="resolution" value="4.00 A"/>
    <property type="chains" value="A=2-495"/>
</dbReference>
<dbReference type="PDB" id="3A5X">
    <property type="method" value="EM"/>
    <property type="resolution" value="4.00 A"/>
    <property type="chains" value="A=2-495"/>
</dbReference>
<dbReference type="PDB" id="5YUD">
    <property type="method" value="EM"/>
    <property type="resolution" value="4.28 A"/>
    <property type="chains" value="C=452-495"/>
</dbReference>
<dbReference type="PDB" id="6CH3">
    <property type="method" value="X-ray"/>
    <property type="resolution" value="2.68 A"/>
    <property type="chains" value="B=431-495"/>
</dbReference>
<dbReference type="PDB" id="8FML">
    <property type="method" value="EM"/>
    <property type="resolution" value="2.93 A"/>
    <property type="chains" value="B=1-495"/>
</dbReference>
<dbReference type="PDB" id="9IWQ">
    <property type="method" value="EM"/>
    <property type="resolution" value="2.08 A"/>
    <property type="chains" value="A=2-495"/>
</dbReference>
<dbReference type="PDBsum" id="1IO1"/>
<dbReference type="PDBsum" id="1UCU"/>
<dbReference type="PDBsum" id="3A5X"/>
<dbReference type="PDBsum" id="5YUD"/>
<dbReference type="PDBsum" id="6CH3"/>
<dbReference type="PDBsum" id="8FML"/>
<dbReference type="PDBsum" id="9IWQ"/>
<dbReference type="EMDB" id="EMD-29296"/>
<dbReference type="EMDB" id="EMD-60959"/>
<dbReference type="EMDB" id="EMD-6845"/>
<dbReference type="SMR" id="P06179"/>
<dbReference type="DIP" id="DIP-43768N"/>
<dbReference type="IntAct" id="P06179">
    <property type="interactions" value="6"/>
</dbReference>
<dbReference type="MINT" id="P06179"/>
<dbReference type="STRING" id="99287.STM1959"/>
<dbReference type="PaxDb" id="99287-STM1959"/>
<dbReference type="GeneID" id="1253480"/>
<dbReference type="KEGG" id="stm:STM1959"/>
<dbReference type="PATRIC" id="fig|99287.12.peg.2074"/>
<dbReference type="HOGENOM" id="CLU_011142_7_2_6"/>
<dbReference type="OMA" id="KETTRMV"/>
<dbReference type="PhylomeDB" id="P06179"/>
<dbReference type="BioCyc" id="SENT99287:STM1959-MONOMER"/>
<dbReference type="Reactome" id="R-GGA-433822">
    <property type="pathway name" value="NFkB and MAPK activation mediated by TRAF6"/>
</dbReference>
<dbReference type="Reactome" id="R-GGA-451534">
    <property type="pathway name" value="TLR5 cascade"/>
</dbReference>
<dbReference type="Reactome" id="R-GGA-977240">
    <property type="pathway name" value="MyD88 cascade initiated on plasma membrane"/>
</dbReference>
<dbReference type="Reactome" id="R-HSA-844623">
    <property type="pathway name" value="The IPAF inflammasome"/>
</dbReference>
<dbReference type="EvolutionaryTrace" id="P06179"/>
<dbReference type="PHI-base" id="PHI:10340"/>
<dbReference type="PHI-base" id="PHI:11610"/>
<dbReference type="PHI-base" id="PHI:6462"/>
<dbReference type="PHI-base" id="PHI:7449"/>
<dbReference type="PHI-base" id="PHI:7576"/>
<dbReference type="PHI-base" id="PHI:8372"/>
<dbReference type="Proteomes" id="UP000001014">
    <property type="component" value="Chromosome"/>
</dbReference>
<dbReference type="GO" id="GO:0009288">
    <property type="term" value="C:bacterial-type flagellum"/>
    <property type="evidence" value="ECO:0007669"/>
    <property type="project" value="UniProtKB-SubCell"/>
</dbReference>
<dbReference type="GO" id="GO:0005615">
    <property type="term" value="C:extracellular space"/>
    <property type="evidence" value="ECO:0000314"/>
    <property type="project" value="UniProt"/>
</dbReference>
<dbReference type="GO" id="GO:0048018">
    <property type="term" value="F:receptor ligand activity"/>
    <property type="evidence" value="ECO:0000314"/>
    <property type="project" value="UniProt"/>
</dbReference>
<dbReference type="GO" id="GO:0005198">
    <property type="term" value="F:structural molecule activity"/>
    <property type="evidence" value="ECO:0007669"/>
    <property type="project" value="InterPro"/>
</dbReference>
<dbReference type="DisProt" id="DP00026"/>
<dbReference type="Gene3D" id="6.10.280.190">
    <property type="match status" value="1"/>
</dbReference>
<dbReference type="Gene3D" id="2.30.220.10">
    <property type="entry name" value="f41 fragment of flagellin, C-terminal domain"/>
    <property type="match status" value="1"/>
</dbReference>
<dbReference type="Gene3D" id="2.170.280.10">
    <property type="entry name" value="f41 fragment of flagellin, middle domain"/>
    <property type="match status" value="1"/>
</dbReference>
<dbReference type="Gene3D" id="1.20.1330.10">
    <property type="entry name" value="f41 fragment of flagellin, N-terminal domain"/>
    <property type="match status" value="1"/>
</dbReference>
<dbReference type="Gene3D" id="6.10.10.10">
    <property type="entry name" value="Flagellar export chaperone, C-terminal domain"/>
    <property type="match status" value="1"/>
</dbReference>
<dbReference type="InterPro" id="IPR001492">
    <property type="entry name" value="Flagellin"/>
</dbReference>
<dbReference type="InterPro" id="IPR046358">
    <property type="entry name" value="Flagellin_C"/>
</dbReference>
<dbReference type="InterPro" id="IPR042187">
    <property type="entry name" value="Flagellin_C_sub2"/>
</dbReference>
<dbReference type="InterPro" id="IPR014981">
    <property type="entry name" value="Flagellin_D3"/>
</dbReference>
<dbReference type="InterPro" id="IPR001029">
    <property type="entry name" value="Flagellin_N"/>
</dbReference>
<dbReference type="InterPro" id="IPR049365">
    <property type="entry name" value="FLIC_barrel"/>
</dbReference>
<dbReference type="PANTHER" id="PTHR42792">
    <property type="entry name" value="FLAGELLIN"/>
    <property type="match status" value="1"/>
</dbReference>
<dbReference type="PANTHER" id="PTHR42792:SF2">
    <property type="entry name" value="FLAGELLIN"/>
    <property type="match status" value="1"/>
</dbReference>
<dbReference type="Pfam" id="PF00700">
    <property type="entry name" value="Flagellin_C"/>
    <property type="match status" value="1"/>
</dbReference>
<dbReference type="Pfam" id="PF08884">
    <property type="entry name" value="Flagellin_D3"/>
    <property type="match status" value="1"/>
</dbReference>
<dbReference type="Pfam" id="PF00669">
    <property type="entry name" value="Flagellin_N"/>
    <property type="match status" value="1"/>
</dbReference>
<dbReference type="Pfam" id="PF21504">
    <property type="entry name" value="FLIC_barrel"/>
    <property type="match status" value="1"/>
</dbReference>
<dbReference type="PRINTS" id="PR00207">
    <property type="entry name" value="FLAGELLIN"/>
</dbReference>
<dbReference type="SUPFAM" id="SSF64518">
    <property type="entry name" value="Phase 1 flagellin"/>
    <property type="match status" value="1"/>
</dbReference>
<evidence type="ECO:0000250" key="1"/>
<evidence type="ECO:0000269" key="2">
    <source>
    </source>
</evidence>
<evidence type="ECO:0000305" key="3"/>
<evidence type="ECO:0007829" key="4">
    <source>
        <dbReference type="PDB" id="1IO1"/>
    </source>
</evidence>
<evidence type="ECO:0007829" key="5">
    <source>
        <dbReference type="PDB" id="8FML"/>
    </source>
</evidence>
<evidence type="ECO:0007829" key="6">
    <source>
        <dbReference type="PDB" id="9IWQ"/>
    </source>
</evidence>
<feature type="initiator methionine" description="Removed" evidence="1">
    <location>
        <position position="1"/>
    </location>
</feature>
<feature type="chain" id="PRO_0000182578" description="Flagellin">
    <location>
        <begin position="2"/>
        <end position="495"/>
    </location>
</feature>
<feature type="sequence conflict" description="In Ref. 1; AAA27072." evidence="3" ref="1">
    <original>S</original>
    <variation>N</variation>
    <location>
        <position position="127"/>
    </location>
</feature>
<feature type="sequence conflict" description="In Ref. 1; AAA27072." evidence="3" ref="1">
    <original>N</original>
    <variation>S</variation>
    <location>
        <position position="133"/>
    </location>
</feature>
<feature type="sequence conflict" description="In Ref. 1; AAA27072." evidence="3" ref="1">
    <original>Q</original>
    <variation>E</variation>
    <location>
        <position position="215"/>
    </location>
</feature>
<feature type="sequence conflict" description="In Ref. 1; AAA27072." evidence="3" ref="1">
    <original>GGATSPLTGGLPA</original>
    <variation>AVTPATVT</variation>
    <location>
        <begin position="261"/>
        <end position="273"/>
    </location>
</feature>
<feature type="sequence conflict" description="In Ref. 1; AAA27072." evidence="3" ref="1">
    <original>EDVKNVQV</original>
    <variation>ALSGKMYS</variation>
    <location>
        <begin position="277"/>
        <end position="284"/>
    </location>
</feature>
<feature type="sequence conflict" description="In Ref. 1; AAA27072." evidence="3" ref="1">
    <original>ADLTE</original>
    <variation>PDSDI</variation>
    <location>
        <begin position="287"/>
        <end position="291"/>
    </location>
</feature>
<feature type="sequence conflict" description="In Ref. 1; AAA27072." evidence="3" ref="1">
    <original>N</original>
    <variation>D</variation>
    <location>
        <position position="338"/>
    </location>
</feature>
<feature type="sequence conflict" description="In Ref. 1; AAA27072." evidence="3" ref="1">
    <original>N</original>
    <variation>D</variation>
    <location>
        <position position="346"/>
    </location>
</feature>
<feature type="sequence conflict" description="In Ref. 1; AAA27072." evidence="3" ref="1">
    <original>D</original>
    <variation>N</variation>
    <location>
        <position position="354"/>
    </location>
</feature>
<feature type="sequence conflict" description="In Ref. 1; AAA27072." evidence="3" ref="1">
    <original>SIG</original>
    <variation>TID</variation>
    <location>
        <begin position="375"/>
        <end position="377"/>
    </location>
</feature>
<feature type="sequence conflict" description="In Ref. 1; AAA27072." evidence="3" ref="1">
    <original>A</original>
    <variation>N</variation>
    <location>
        <position position="382"/>
    </location>
</feature>
<feature type="sequence conflict" description="In Ref. 1; AAA27072." evidence="3" ref="1">
    <original>E</original>
    <variation>A</variation>
    <location>
        <position position="387"/>
    </location>
</feature>
<feature type="sequence conflict" description="In Ref. 1; AAA27072." evidence="3" ref="1">
    <original>N</original>
    <variation>D</variation>
    <location>
        <position position="390"/>
    </location>
</feature>
<feature type="sequence conflict" description="In Ref. 1; AAA27072." evidence="3" ref="1">
    <original>QPD</original>
    <variation>EPE</variation>
    <location>
        <begin position="394"/>
        <end position="396"/>
    </location>
</feature>
<feature type="sequence conflict" description="In Ref. 1; AAA27072." evidence="3" ref="1">
    <original>A</original>
    <variation>Q</variation>
    <location>
        <position position="400"/>
    </location>
</feature>
<feature type="sequence conflict" description="In Ref. 1; AAA27072." evidence="3" ref="1">
    <original>T</original>
    <variation>K</variation>
    <location>
        <position position="403"/>
    </location>
</feature>
<feature type="sequence conflict" description="In Ref. 1; AAA27072." evidence="3" ref="1">
    <original>T</original>
    <variation>S</variation>
    <location>
        <position position="448"/>
    </location>
</feature>
<feature type="strand" evidence="5">
    <location>
        <begin position="3"/>
        <end position="5"/>
    </location>
</feature>
<feature type="helix" evidence="6">
    <location>
        <begin position="9"/>
        <end position="34"/>
    </location>
</feature>
<feature type="strand" evidence="6">
    <location>
        <begin position="35"/>
        <end position="37"/>
    </location>
</feature>
<feature type="turn" evidence="6">
    <location>
        <begin position="41"/>
        <end position="43"/>
    </location>
</feature>
<feature type="helix" evidence="4">
    <location>
        <begin position="59"/>
        <end position="99"/>
    </location>
</feature>
<feature type="helix" evidence="4">
    <location>
        <begin position="106"/>
        <end position="129"/>
    </location>
</feature>
<feature type="turn" evidence="4">
    <location>
        <begin position="137"/>
        <end position="139"/>
    </location>
</feature>
<feature type="strand" evidence="4">
    <location>
        <begin position="142"/>
        <end position="147"/>
    </location>
</feature>
<feature type="strand" evidence="4">
    <location>
        <begin position="149"/>
        <end position="151"/>
    </location>
</feature>
<feature type="strand" evidence="4">
    <location>
        <begin position="155"/>
        <end position="160"/>
    </location>
</feature>
<feature type="turn" evidence="4">
    <location>
        <begin position="165"/>
        <end position="169"/>
    </location>
</feature>
<feature type="strand" evidence="4">
    <location>
        <begin position="180"/>
        <end position="185"/>
    </location>
</feature>
<feature type="strand" evidence="4">
    <location>
        <begin position="190"/>
        <end position="197"/>
    </location>
</feature>
<feature type="helix" evidence="4">
    <location>
        <begin position="200"/>
        <end position="202"/>
    </location>
</feature>
<feature type="turn" evidence="4">
    <location>
        <begin position="204"/>
        <end position="206"/>
    </location>
</feature>
<feature type="helix" evidence="4">
    <location>
        <begin position="208"/>
        <end position="210"/>
    </location>
</feature>
<feature type="strand" evidence="4">
    <location>
        <begin position="212"/>
        <end position="217"/>
    </location>
</feature>
<feature type="strand" evidence="4">
    <location>
        <begin position="219"/>
        <end position="223"/>
    </location>
</feature>
<feature type="turn" evidence="4">
    <location>
        <begin position="225"/>
        <end position="227"/>
    </location>
</feature>
<feature type="strand" evidence="4">
    <location>
        <begin position="230"/>
        <end position="237"/>
    </location>
</feature>
<feature type="strand" evidence="4">
    <location>
        <begin position="244"/>
        <end position="250"/>
    </location>
</feature>
<feature type="turn" evidence="4">
    <location>
        <begin position="252"/>
        <end position="254"/>
    </location>
</feature>
<feature type="strand" evidence="4">
    <location>
        <begin position="256"/>
        <end position="260"/>
    </location>
</feature>
<feature type="strand" evidence="4">
    <location>
        <begin position="277"/>
        <end position="285"/>
    </location>
</feature>
<feature type="helix" evidence="4">
    <location>
        <begin position="286"/>
        <end position="288"/>
    </location>
</feature>
<feature type="helix" evidence="4">
    <location>
        <begin position="290"/>
        <end position="298"/>
    </location>
</feature>
<feature type="strand" evidence="4">
    <location>
        <begin position="305"/>
        <end position="313"/>
    </location>
</feature>
<feature type="strand" evidence="4">
    <location>
        <begin position="319"/>
        <end position="328"/>
    </location>
</feature>
<feature type="strand" evidence="4">
    <location>
        <begin position="331"/>
        <end position="337"/>
    </location>
</feature>
<feature type="strand" evidence="4">
    <location>
        <begin position="343"/>
        <end position="345"/>
    </location>
</feature>
<feature type="strand" evidence="6">
    <location>
        <begin position="347"/>
        <end position="351"/>
    </location>
</feature>
<feature type="strand" evidence="4">
    <location>
        <begin position="353"/>
        <end position="356"/>
    </location>
</feature>
<feature type="strand" evidence="4">
    <location>
        <begin position="361"/>
        <end position="366"/>
    </location>
</feature>
<feature type="strand" evidence="4">
    <location>
        <begin position="371"/>
        <end position="376"/>
    </location>
</feature>
<feature type="strand" evidence="4">
    <location>
        <begin position="379"/>
        <end position="382"/>
    </location>
</feature>
<feature type="helix" evidence="4">
    <location>
        <begin position="383"/>
        <end position="386"/>
    </location>
</feature>
<feature type="turn" evidence="4">
    <location>
        <begin position="391"/>
        <end position="393"/>
    </location>
</feature>
<feature type="helix" evidence="4">
    <location>
        <begin position="408"/>
        <end position="448"/>
    </location>
</feature>
<feature type="helix" evidence="6">
    <location>
        <begin position="459"/>
        <end position="485"/>
    </location>
</feature>
<feature type="helix" evidence="6">
    <location>
        <begin position="488"/>
        <end position="494"/>
    </location>
</feature>
<organism>
    <name type="scientific">Salmonella typhimurium (strain LT2 / SGSC1412 / ATCC 700720)</name>
    <dbReference type="NCBI Taxonomy" id="99287"/>
    <lineage>
        <taxon>Bacteria</taxon>
        <taxon>Pseudomonadati</taxon>
        <taxon>Pseudomonadota</taxon>
        <taxon>Gammaproteobacteria</taxon>
        <taxon>Enterobacterales</taxon>
        <taxon>Enterobacteriaceae</taxon>
        <taxon>Salmonella</taxon>
    </lineage>
</organism>
<proteinExistence type="evidence at protein level"/>
<sequence length="495" mass="51612">MAQVINTNSLSLLTQNNLNKSQSALGTAIERLSSGLRINSAKDDAAGQAIANRFTANIKGLTQASRNANDGISIAQTTEGALNEINNNLQRVRELAVQSANSTNSQSDLDSIQAEITQRLNEIDRVSGQTQFNGVKVLAQDNTLTIQVGANDGETIDIDLKQINSQTLGLDTLNVQQKYKVSDTAATVTGYADTTIALDNSTFKASATGLGGTDQKIDGDLKFDDTTGKYYAKVTVTGGTGKDGYYEVSVDKTNGEVTLAGGATSPLTGGLPATATEDVKNVQVANADLTEAKAALTAAGVTGTASVVKMSYTDNNGKTIDGGLAVKVGDDYYSATQNKDGSISINTTKYTADDGTSKTALNKLGGADGKTEVVSIGGKTYAASKAEGHNFKAQPDLAEAAATTTENPLQKIDAALAQVDTLRSDLGAVQNRFNSAITNLGNTVNNLTSARSRIEDSDYATEVSNMSRAQILQQAGTSVLAQANQVPQNVLSLLR</sequence>
<gene>
    <name type="primary">fliC</name>
    <name type="synonym">flaF</name>
    <name type="synonym">hag</name>
    <name type="ordered locus">STM1959</name>
</gene>